<accession>P28494</accession>
<accession>G3V7Y9</accession>
<evidence type="ECO:0000250" key="1">
    <source>
        <dbReference type="UniProtKB" id="Q29451"/>
    </source>
</evidence>
<evidence type="ECO:0000255" key="2"/>
<evidence type="ECO:0000256" key="3">
    <source>
        <dbReference type="SAM" id="MobiDB-lite"/>
    </source>
</evidence>
<evidence type="ECO:0000269" key="4">
    <source>
    </source>
</evidence>
<evidence type="ECO:0000269" key="5">
    <source>
    </source>
</evidence>
<evidence type="ECO:0000269" key="6">
    <source>
    </source>
</evidence>
<evidence type="ECO:0000303" key="7">
    <source>
    </source>
</evidence>
<evidence type="ECO:0000305" key="8"/>
<evidence type="ECO:0007744" key="9">
    <source>
    </source>
</evidence>
<name>MA2A1_RAT</name>
<sequence>MKLSRQFTVFGSAIFCVVIFSLYLMLDRGHLDYPRGPRQEGSFPQGQLSILQEKIDHLERLLAENNEIISNIRDSVINLSESVEDGPRGPAGNASQGSAHLHSAQLALQADPKDCLFASQSGNQHRDVQMLDVYDLIPFDNPDGGVWKQGFDIKYEADEWDREPLQVFVVPHSHNDPGWLKTFNDYFRDKTQYIFNNMVLKLKEDSSRKFIWSEISYLAKWWDIIDNPKKEAVKSLLQNGQLEIVTGGWVMADEATTHYFALIDQLIEGHQWLEKNLGVKPRSGWAIDPFGHSPTMTYLLKRAGFSHMLIQRVHYSVKKHFSLQKTLEFFWRQNWDLGSTTDILCHMMPFYSYDIPHTCGPDPKICCQFDFKRLPGGRYGCPWGVPPEAISPGNVQSRAQMLLDQYRKKSKLFRTKVLLAPLGDDFRFSEYTEWDLQYRNYEQLFSYMNSQPHLKVKIQFGTLSDYFDALEKSVAAEKKGGQSVFPALSGDFFTYADRDDHYWSGYFTSRPFYKRMDRIMESRLRTAEILYHLALKQAQKYKINKFLSSPHYTTLTEARRNLGLFQHHDAITGTAKDWVVVDYGTRLFQSLNSLEKIIGDSAFLLILKDKKLYQSDPSKAFLEMDTKQSSQDSLPKKNIIQLSAQEPRYLVVYNPFEQERHSVVSVRVNSATVKVLSDLGKAVEVQVSAVWKDMRTTSQAAYEVAFLAHLPPLGLKVYKILESQSSSSHLADYFLYNNDGQAESGIFHMKNMVDSGDAITIENSFLTLGFDRSGLMEKVRRKEDNKQQELKVQFLWYGTTNKRDKSGAYLFLPDGQGQPYVSLRTPFVRVTRGRIYSDVTCFLEHVTHKVRLYHIQGIEGQSMEVSNIVDIRSVHNREIVMRISSKINNQNRYYTDLNGYQIQPRRTMAKLPLQANVYPMSTMAYIQDAAHRLTLLSAQSLGASSMASGQIEVFMDRRLMQDDNRGLGQGVHDNKITANLFRILLEKRNGMNMEEDKKSPVSYPSLLSHMTSAFLNHPFLPMVLSGQLPSPAIELLSEFRLLQSSLPCDIHLVNLRTIQSKVGKGYSDEAALILHRKVFDCQLSSRAMGLPCSTTQGKMSIPKLFNNFAVESFIPSSLSLMHSPPDAQNTSEVSLSPMEISTSRIRLR</sequence>
<protein>
    <recommendedName>
        <fullName>Alpha-mannosidase 2</fullName>
        <ecNumber evidence="4">3.2.1.114</ecNumber>
    </recommendedName>
    <alternativeName>
        <fullName>Golgi alpha-mannosidase II</fullName>
        <shortName>AMan II</shortName>
        <shortName>Man II</shortName>
    </alternativeName>
    <alternativeName>
        <fullName>Mannosidase alpha class 2A member 1</fullName>
    </alternativeName>
    <alternativeName>
        <fullName>Mannosyl-oligosaccharide 1,3-1,6-alpha-mannosidase</fullName>
    </alternativeName>
</protein>
<gene>
    <name type="primary">Man2a1</name>
    <name type="synonym">Mana2</name>
</gene>
<feature type="chain" id="PRO_0000206904" description="Alpha-mannosidase 2">
    <location>
        <begin position="1"/>
        <end position="1148"/>
    </location>
</feature>
<feature type="topological domain" description="Cytoplasmic" evidence="2">
    <location>
        <begin position="1"/>
        <end position="5"/>
    </location>
</feature>
<feature type="transmembrane region" description="Helical; Signal-anchor for type II membrane protein" evidence="2">
    <location>
        <begin position="6"/>
        <end position="26"/>
    </location>
</feature>
<feature type="topological domain" description="Lumenal" evidence="2">
    <location>
        <begin position="27"/>
        <end position="1148"/>
    </location>
</feature>
<feature type="region of interest" description="Disordered" evidence="3">
    <location>
        <begin position="1121"/>
        <end position="1148"/>
    </location>
</feature>
<feature type="active site" description="Nucleophile" evidence="1">
    <location>
        <position position="288"/>
    </location>
</feature>
<feature type="binding site" evidence="1">
    <location>
        <position position="174"/>
    </location>
    <ligand>
        <name>Zn(2+)</name>
        <dbReference type="ChEBI" id="CHEBI:29105"/>
    </ligand>
</feature>
<feature type="binding site" evidence="1">
    <location>
        <position position="176"/>
    </location>
    <ligand>
        <name>Zn(2+)</name>
        <dbReference type="ChEBI" id="CHEBI:29105"/>
    </ligand>
</feature>
<feature type="binding site" evidence="1">
    <location>
        <position position="288"/>
    </location>
    <ligand>
        <name>Zn(2+)</name>
        <dbReference type="ChEBI" id="CHEBI:29105"/>
    </ligand>
</feature>
<feature type="binding site" evidence="1">
    <location>
        <position position="568"/>
    </location>
    <ligand>
        <name>Zn(2+)</name>
        <dbReference type="ChEBI" id="CHEBI:29105"/>
    </ligand>
</feature>
<feature type="modified residue" description="Phosphoserine" evidence="9">
    <location>
        <position position="80"/>
    </location>
</feature>
<feature type="modified residue" description="Phosphoserine" evidence="9">
    <location>
        <position position="82"/>
    </location>
</feature>
<feature type="glycosylation site" description="N-linked (GlcNAc...) asparagine" evidence="2">
    <location>
        <position position="93"/>
    </location>
</feature>
<feature type="sequence conflict" description="In Ref. 3; AAA66457." ref="3">
    <original>G</original>
    <variation>GFSPHIIRVERKG</variation>
    <location>
        <position position="46"/>
    </location>
</feature>
<feature type="sequence conflict" description="In Ref. 4; AA sequence." evidence="8" ref="4">
    <original>A</original>
    <variation>G</variation>
    <location>
        <position position="157"/>
    </location>
</feature>
<feature type="sequence conflict" description="In Ref. 4; AA sequence." evidence="8" ref="4">
    <original>W</original>
    <variation>I</variation>
    <location>
        <position position="160"/>
    </location>
</feature>
<feature type="sequence conflict" description="In Ref. 4; AA sequence." evidence="8" ref="4">
    <original>I</original>
    <variation>G</variation>
    <location>
        <position position="244"/>
    </location>
</feature>
<feature type="sequence conflict" description="In Ref. 4; AA sequence." evidence="8" ref="4">
    <original>G</original>
    <variation>K</variation>
    <location>
        <position position="247"/>
    </location>
</feature>
<feature type="sequence conflict" description="In Ref. 5; AA sequence." evidence="8" ref="5">
    <original>F</original>
    <variation>I</variation>
    <location>
        <position position="493"/>
    </location>
</feature>
<organism>
    <name type="scientific">Rattus norvegicus</name>
    <name type="common">Rat</name>
    <dbReference type="NCBI Taxonomy" id="10116"/>
    <lineage>
        <taxon>Eukaryota</taxon>
        <taxon>Metazoa</taxon>
        <taxon>Chordata</taxon>
        <taxon>Craniata</taxon>
        <taxon>Vertebrata</taxon>
        <taxon>Euteleostomi</taxon>
        <taxon>Mammalia</taxon>
        <taxon>Eutheria</taxon>
        <taxon>Euarchontoglires</taxon>
        <taxon>Glires</taxon>
        <taxon>Rodentia</taxon>
        <taxon>Myomorpha</taxon>
        <taxon>Muroidea</taxon>
        <taxon>Muridae</taxon>
        <taxon>Murinae</taxon>
        <taxon>Rattus</taxon>
    </lineage>
</organism>
<dbReference type="EC" id="3.2.1.114" evidence="4"/>
<dbReference type="EMBL" id="AABR06062074">
    <property type="status" value="NOT_ANNOTATED_CDS"/>
    <property type="molecule type" value="Genomic_DNA"/>
</dbReference>
<dbReference type="EMBL" id="AABR06062075">
    <property type="status" value="NOT_ANNOTATED_CDS"/>
    <property type="molecule type" value="Genomic_DNA"/>
</dbReference>
<dbReference type="EMBL" id="CH473997">
    <property type="protein sequence ID" value="EDL91825.1"/>
    <property type="molecule type" value="Genomic_DNA"/>
</dbReference>
<dbReference type="EMBL" id="M24353">
    <property type="protein sequence ID" value="AAA66457.1"/>
    <property type="molecule type" value="mRNA"/>
</dbReference>
<dbReference type="PIR" id="A33901">
    <property type="entry name" value="A33901"/>
</dbReference>
<dbReference type="RefSeq" id="NP_037111.2">
    <property type="nucleotide sequence ID" value="NM_012979.2"/>
</dbReference>
<dbReference type="SMR" id="P28494"/>
<dbReference type="FunCoup" id="P28494">
    <property type="interactions" value="1945"/>
</dbReference>
<dbReference type="IntAct" id="P28494">
    <property type="interactions" value="2"/>
</dbReference>
<dbReference type="MINT" id="P28494"/>
<dbReference type="STRING" id="10116.ENSRNOP00000020767"/>
<dbReference type="BindingDB" id="P28494"/>
<dbReference type="ChEMBL" id="CHEMBL2257"/>
<dbReference type="CAZy" id="GH38">
    <property type="family name" value="Glycoside Hydrolase Family 38"/>
</dbReference>
<dbReference type="GlyCosmos" id="P28494">
    <property type="glycosylation" value="1 site, No reported glycans"/>
</dbReference>
<dbReference type="GlyGen" id="P28494">
    <property type="glycosylation" value="2 sites"/>
</dbReference>
<dbReference type="iPTMnet" id="P28494"/>
<dbReference type="PhosphoSitePlus" id="P28494"/>
<dbReference type="jPOST" id="P28494"/>
<dbReference type="PaxDb" id="10116-ENSRNOP00000020767"/>
<dbReference type="PeptideAtlas" id="P28494"/>
<dbReference type="Ensembl" id="ENSRNOT00000020767.7">
    <property type="protein sequence ID" value="ENSRNOP00000020767.5"/>
    <property type="gene ID" value="ENSRNOG00000015439.8"/>
</dbReference>
<dbReference type="GeneID" id="25478"/>
<dbReference type="KEGG" id="rno:25478"/>
<dbReference type="UCSC" id="RGD:3038">
    <property type="organism name" value="rat"/>
</dbReference>
<dbReference type="AGR" id="RGD:3038"/>
<dbReference type="CTD" id="4124"/>
<dbReference type="RGD" id="3038">
    <property type="gene designation" value="Man2a1"/>
</dbReference>
<dbReference type="eggNOG" id="KOG1958">
    <property type="taxonomic scope" value="Eukaryota"/>
</dbReference>
<dbReference type="GeneTree" id="ENSGT01030000234638"/>
<dbReference type="HOGENOM" id="CLU_004690_1_0_1"/>
<dbReference type="InParanoid" id="P28494"/>
<dbReference type="OMA" id="NTDILCH"/>
<dbReference type="OrthoDB" id="10261055at2759"/>
<dbReference type="TreeFam" id="TF313152"/>
<dbReference type="Reactome" id="R-RNO-975578">
    <property type="pathway name" value="Reactions specific to the complex N-glycan synthesis pathway"/>
</dbReference>
<dbReference type="UniPathway" id="UPA00378"/>
<dbReference type="PRO" id="PR:P28494"/>
<dbReference type="Proteomes" id="UP000002494">
    <property type="component" value="Chromosome 9"/>
</dbReference>
<dbReference type="Proteomes" id="UP000234681">
    <property type="component" value="Chromosome 9"/>
</dbReference>
<dbReference type="Bgee" id="ENSRNOG00000015439">
    <property type="expression patterns" value="Expressed in ovary and 19 other cell types or tissues"/>
</dbReference>
<dbReference type="ExpressionAtlas" id="P28494">
    <property type="expression patterns" value="baseline and differential"/>
</dbReference>
<dbReference type="GO" id="GO:0005801">
    <property type="term" value="C:cis-Golgi network"/>
    <property type="evidence" value="ECO:0000266"/>
    <property type="project" value="RGD"/>
</dbReference>
<dbReference type="GO" id="GO:0005615">
    <property type="term" value="C:extracellular space"/>
    <property type="evidence" value="ECO:0000266"/>
    <property type="project" value="RGD"/>
</dbReference>
<dbReference type="GO" id="GO:0005794">
    <property type="term" value="C:Golgi apparatus"/>
    <property type="evidence" value="ECO:0000266"/>
    <property type="project" value="RGD"/>
</dbReference>
<dbReference type="GO" id="GO:0005797">
    <property type="term" value="C:Golgi medial cisterna"/>
    <property type="evidence" value="ECO:0000266"/>
    <property type="project" value="RGD"/>
</dbReference>
<dbReference type="GO" id="GO:0000139">
    <property type="term" value="C:Golgi membrane"/>
    <property type="evidence" value="ECO:0000314"/>
    <property type="project" value="UniProtKB"/>
</dbReference>
<dbReference type="GO" id="GO:0004559">
    <property type="term" value="F:alpha-mannosidase activity"/>
    <property type="evidence" value="ECO:0000318"/>
    <property type="project" value="GO_Central"/>
</dbReference>
<dbReference type="GO" id="GO:0030246">
    <property type="term" value="F:carbohydrate binding"/>
    <property type="evidence" value="ECO:0007669"/>
    <property type="project" value="InterPro"/>
</dbReference>
<dbReference type="GO" id="GO:0016787">
    <property type="term" value="F:hydrolase activity"/>
    <property type="evidence" value="ECO:0000266"/>
    <property type="project" value="RGD"/>
</dbReference>
<dbReference type="GO" id="GO:0016799">
    <property type="term" value="F:hydrolase activity, hydrolyzing N-glycosyl compounds"/>
    <property type="evidence" value="ECO:0000266"/>
    <property type="project" value="RGD"/>
</dbReference>
<dbReference type="GO" id="GO:0042802">
    <property type="term" value="F:identical protein binding"/>
    <property type="evidence" value="ECO:0000314"/>
    <property type="project" value="UniProtKB"/>
</dbReference>
<dbReference type="GO" id="GO:0015923">
    <property type="term" value="F:mannosidase activity"/>
    <property type="evidence" value="ECO:0000266"/>
    <property type="project" value="RGD"/>
</dbReference>
<dbReference type="GO" id="GO:0004572">
    <property type="term" value="F:mannosyl-oligosaccharide 1,3-1,6-alpha-mannosidase activity"/>
    <property type="evidence" value="ECO:0000314"/>
    <property type="project" value="UniProtKB"/>
</dbReference>
<dbReference type="GO" id="GO:0042803">
    <property type="term" value="F:protein homodimerization activity"/>
    <property type="evidence" value="ECO:0000314"/>
    <property type="project" value="UniProtKB"/>
</dbReference>
<dbReference type="GO" id="GO:0008270">
    <property type="term" value="F:zinc ion binding"/>
    <property type="evidence" value="ECO:0000250"/>
    <property type="project" value="UniProtKB"/>
</dbReference>
<dbReference type="GO" id="GO:0001701">
    <property type="term" value="P:in utero embryonic development"/>
    <property type="evidence" value="ECO:0000266"/>
    <property type="project" value="RGD"/>
</dbReference>
<dbReference type="GO" id="GO:0001889">
    <property type="term" value="P:liver development"/>
    <property type="evidence" value="ECO:0000266"/>
    <property type="project" value="RGD"/>
</dbReference>
<dbReference type="GO" id="GO:0048286">
    <property type="term" value="P:lung alveolus development"/>
    <property type="evidence" value="ECO:0000266"/>
    <property type="project" value="RGD"/>
</dbReference>
<dbReference type="GO" id="GO:0006013">
    <property type="term" value="P:mannose metabolic process"/>
    <property type="evidence" value="ECO:0007669"/>
    <property type="project" value="InterPro"/>
</dbReference>
<dbReference type="GO" id="GO:0007005">
    <property type="term" value="P:mitochondrion organization"/>
    <property type="evidence" value="ECO:0000266"/>
    <property type="project" value="RGD"/>
</dbReference>
<dbReference type="GO" id="GO:0006491">
    <property type="term" value="P:N-glycan processing"/>
    <property type="evidence" value="ECO:0000314"/>
    <property type="project" value="UniProtKB"/>
</dbReference>
<dbReference type="GO" id="GO:0050769">
    <property type="term" value="P:positive regulation of neurogenesis"/>
    <property type="evidence" value="ECO:0000266"/>
    <property type="project" value="RGD"/>
</dbReference>
<dbReference type="GO" id="GO:0006486">
    <property type="term" value="P:protein glycosylation"/>
    <property type="evidence" value="ECO:0007669"/>
    <property type="project" value="UniProtKB-UniPathway"/>
</dbReference>
<dbReference type="GO" id="GO:0007585">
    <property type="term" value="P:respiratory gaseous exchange by respiratory system"/>
    <property type="evidence" value="ECO:0000266"/>
    <property type="project" value="RGD"/>
</dbReference>
<dbReference type="GO" id="GO:0060042">
    <property type="term" value="P:retina morphogenesis in camera-type eye"/>
    <property type="evidence" value="ECO:0000266"/>
    <property type="project" value="RGD"/>
</dbReference>
<dbReference type="GO" id="GO:0007033">
    <property type="term" value="P:vacuole organization"/>
    <property type="evidence" value="ECO:0000266"/>
    <property type="project" value="RGD"/>
</dbReference>
<dbReference type="CDD" id="cd11666">
    <property type="entry name" value="GH38N_Man2A1"/>
    <property type="match status" value="1"/>
</dbReference>
<dbReference type="FunFam" id="1.20.1270.50:FF:000001">
    <property type="entry name" value="Alpha-mannosidase"/>
    <property type="match status" value="1"/>
</dbReference>
<dbReference type="FunFam" id="2.60.40.1180:FF:000009">
    <property type="entry name" value="Alpha-mannosidase"/>
    <property type="match status" value="1"/>
</dbReference>
<dbReference type="FunFam" id="2.70.98.30:FF:000002">
    <property type="entry name" value="Alpha-mannosidase"/>
    <property type="match status" value="1"/>
</dbReference>
<dbReference type="FunFam" id="3.20.110.10:FF:000003">
    <property type="entry name" value="Alpha-mannosidase"/>
    <property type="match status" value="1"/>
</dbReference>
<dbReference type="Gene3D" id="3.20.110.10">
    <property type="entry name" value="Glycoside hydrolase 38, N terminal domain"/>
    <property type="match status" value="1"/>
</dbReference>
<dbReference type="Gene3D" id="1.20.1270.50">
    <property type="entry name" value="Glycoside hydrolase family 38, central domain"/>
    <property type="match status" value="1"/>
</dbReference>
<dbReference type="Gene3D" id="2.60.40.1180">
    <property type="entry name" value="Golgi alpha-mannosidase II"/>
    <property type="match status" value="1"/>
</dbReference>
<dbReference type="Gene3D" id="2.70.98.30">
    <property type="entry name" value="Golgi alpha-mannosidase II, domain 4"/>
    <property type="match status" value="1"/>
</dbReference>
<dbReference type="InterPro" id="IPR011013">
    <property type="entry name" value="Gal_mutarotase_sf_dom"/>
</dbReference>
<dbReference type="InterPro" id="IPR011330">
    <property type="entry name" value="Glyco_hydro/deAcase_b/a-brl"/>
</dbReference>
<dbReference type="InterPro" id="IPR011682">
    <property type="entry name" value="Glyco_hydro_38_C"/>
</dbReference>
<dbReference type="InterPro" id="IPR015341">
    <property type="entry name" value="Glyco_hydro_38_cen"/>
</dbReference>
<dbReference type="InterPro" id="IPR037094">
    <property type="entry name" value="Glyco_hydro_38_cen_sf"/>
</dbReference>
<dbReference type="InterPro" id="IPR000602">
    <property type="entry name" value="Glyco_hydro_38_N"/>
</dbReference>
<dbReference type="InterPro" id="IPR027291">
    <property type="entry name" value="Glyco_hydro_38_N_sf"/>
</dbReference>
<dbReference type="InterPro" id="IPR028995">
    <property type="entry name" value="Glyco_hydro_57/38_cen_sf"/>
</dbReference>
<dbReference type="InterPro" id="IPR013780">
    <property type="entry name" value="Glyco_hydro_b"/>
</dbReference>
<dbReference type="InterPro" id="IPR050843">
    <property type="entry name" value="Glycosyl_Hydrlase_38"/>
</dbReference>
<dbReference type="InterPro" id="IPR048534">
    <property type="entry name" value="Man2a1-like_dom"/>
</dbReference>
<dbReference type="PANTHER" id="PTHR11607">
    <property type="entry name" value="ALPHA-MANNOSIDASE"/>
    <property type="match status" value="1"/>
</dbReference>
<dbReference type="PANTHER" id="PTHR11607:SF69">
    <property type="entry name" value="ALPHA-MANNOSIDASE 2"/>
    <property type="match status" value="1"/>
</dbReference>
<dbReference type="Pfam" id="PF09261">
    <property type="entry name" value="Alpha-mann_mid"/>
    <property type="match status" value="1"/>
</dbReference>
<dbReference type="Pfam" id="PF07748">
    <property type="entry name" value="Glyco_hydro_38C"/>
    <property type="match status" value="1"/>
</dbReference>
<dbReference type="Pfam" id="PF01074">
    <property type="entry name" value="Glyco_hydro_38N"/>
    <property type="match status" value="1"/>
</dbReference>
<dbReference type="Pfam" id="PF21260">
    <property type="entry name" value="Laman-like_dom"/>
    <property type="match status" value="1"/>
</dbReference>
<dbReference type="SMART" id="SM00872">
    <property type="entry name" value="Alpha-mann_mid"/>
    <property type="match status" value="1"/>
</dbReference>
<dbReference type="SUPFAM" id="SSF88688">
    <property type="entry name" value="Families 57/38 glycoside transferase middle domain"/>
    <property type="match status" value="1"/>
</dbReference>
<dbReference type="SUPFAM" id="SSF74650">
    <property type="entry name" value="Galactose mutarotase-like"/>
    <property type="match status" value="1"/>
</dbReference>
<dbReference type="SUPFAM" id="SSF88713">
    <property type="entry name" value="Glycoside hydrolase/deacetylase"/>
    <property type="match status" value="1"/>
</dbReference>
<comment type="function">
    <text evidence="7">Catalyzes the first committed step in the biosynthesis of complex N-glycans. It controls conversion of high mannose to complex N-glycans; the final hydrolytic step in the N-glycan maturation pathway.</text>
</comment>
<comment type="catalytic activity">
    <reaction evidence="4">
        <text>N(4)-{beta-D-GlcNAc-(1-&gt;2)-alpha-D-Man-(1-&gt;3)-[alpha-D-Man-(1-&gt;3)-[alpha-D-Man-(1-&gt;6)]-alpha-D-Man-(1-&gt;6)]-beta-D-Man-(1-&gt;4)-beta-D-GlcNAc-(1-&gt;4)-beta-D-GlcNAc}-L-asparaginyl-[protein] + 2 H2O = 2 alpha-D-mannopyranose + an N(4)-{beta-D-GlcNAc-(1-&gt;2)-alpha-D-Man-(1-&gt;3)-[alpha-D-Man-(1-&gt;6)]-beta-D-Man-(1-&gt;4)-beta-D-GlcNAc-(1-&gt;4)-beta-D-GlcNAc}-L-asparaginyl-[protein]</text>
        <dbReference type="Rhea" id="RHEA:56052"/>
        <dbReference type="Rhea" id="RHEA-COMP:14368"/>
        <dbReference type="Rhea" id="RHEA-COMP:14369"/>
        <dbReference type="ChEBI" id="CHEBI:15377"/>
        <dbReference type="ChEBI" id="CHEBI:28729"/>
        <dbReference type="ChEBI" id="CHEBI:60615"/>
        <dbReference type="ChEBI" id="CHEBI:60625"/>
        <dbReference type="EC" id="3.2.1.114"/>
    </reaction>
</comment>
<comment type="cofactor">
    <cofactor evidence="1">
        <name>Zn(2+)</name>
        <dbReference type="ChEBI" id="CHEBI:29105"/>
    </cofactor>
    <text evidence="1">Binds 1 zinc ion per subunit.</text>
</comment>
<comment type="activity regulation">
    <text evidence="4">Inhibited by swainsonine.</text>
</comment>
<comment type="pathway">
    <text evidence="7">Protein modification; protein glycosylation.</text>
</comment>
<comment type="subunit">
    <text evidence="4 5">Homodimer; disulfide-linked.</text>
</comment>
<comment type="subcellular location">
    <subcellularLocation>
        <location evidence="4 5 6">Golgi apparatus membrane</location>
        <topology evidence="2">Single-pass type II membrane protein</topology>
    </subcellularLocation>
</comment>
<comment type="tissue specificity">
    <text evidence="4 6">Liver.</text>
</comment>
<comment type="PTM">
    <text evidence="4">Glycosylated.</text>
</comment>
<comment type="similarity">
    <text evidence="8">Belongs to the glycosyl hydrolase 38 family.</text>
</comment>
<proteinExistence type="evidence at protein level"/>
<reference key="1">
    <citation type="journal article" date="2004" name="Nature">
        <title>Genome sequence of the Brown Norway rat yields insights into mammalian evolution.</title>
        <authorList>
            <person name="Gibbs R.A."/>
            <person name="Weinstock G.M."/>
            <person name="Metzker M.L."/>
            <person name="Muzny D.M."/>
            <person name="Sodergren E.J."/>
            <person name="Scherer S."/>
            <person name="Scott G."/>
            <person name="Steffen D."/>
            <person name="Worley K.C."/>
            <person name="Burch P.E."/>
            <person name="Okwuonu G."/>
            <person name="Hines S."/>
            <person name="Lewis L."/>
            <person name="Deramo C."/>
            <person name="Delgado O."/>
            <person name="Dugan-Rocha S."/>
            <person name="Miner G."/>
            <person name="Morgan M."/>
            <person name="Hawes A."/>
            <person name="Gill R."/>
            <person name="Holt R.A."/>
            <person name="Adams M.D."/>
            <person name="Amanatides P.G."/>
            <person name="Baden-Tillson H."/>
            <person name="Barnstead M."/>
            <person name="Chin S."/>
            <person name="Evans C.A."/>
            <person name="Ferriera S."/>
            <person name="Fosler C."/>
            <person name="Glodek A."/>
            <person name="Gu Z."/>
            <person name="Jennings D."/>
            <person name="Kraft C.L."/>
            <person name="Nguyen T."/>
            <person name="Pfannkoch C.M."/>
            <person name="Sitter C."/>
            <person name="Sutton G.G."/>
            <person name="Venter J.C."/>
            <person name="Woodage T."/>
            <person name="Smith D."/>
            <person name="Lee H.-M."/>
            <person name="Gustafson E."/>
            <person name="Cahill P."/>
            <person name="Kana A."/>
            <person name="Doucette-Stamm L."/>
            <person name="Weinstock K."/>
            <person name="Fechtel K."/>
            <person name="Weiss R.B."/>
            <person name="Dunn D.M."/>
            <person name="Green E.D."/>
            <person name="Blakesley R.W."/>
            <person name="Bouffard G.G."/>
            <person name="De Jong P.J."/>
            <person name="Osoegawa K."/>
            <person name="Zhu B."/>
            <person name="Marra M."/>
            <person name="Schein J."/>
            <person name="Bosdet I."/>
            <person name="Fjell C."/>
            <person name="Jones S."/>
            <person name="Krzywinski M."/>
            <person name="Mathewson C."/>
            <person name="Siddiqui A."/>
            <person name="Wye N."/>
            <person name="McPherson J."/>
            <person name="Zhao S."/>
            <person name="Fraser C.M."/>
            <person name="Shetty J."/>
            <person name="Shatsman S."/>
            <person name="Geer K."/>
            <person name="Chen Y."/>
            <person name="Abramzon S."/>
            <person name="Nierman W.C."/>
            <person name="Havlak P.H."/>
            <person name="Chen R."/>
            <person name="Durbin K.J."/>
            <person name="Egan A."/>
            <person name="Ren Y."/>
            <person name="Song X.-Z."/>
            <person name="Li B."/>
            <person name="Liu Y."/>
            <person name="Qin X."/>
            <person name="Cawley S."/>
            <person name="Cooney A.J."/>
            <person name="D'Souza L.M."/>
            <person name="Martin K."/>
            <person name="Wu J.Q."/>
            <person name="Gonzalez-Garay M.L."/>
            <person name="Jackson A.R."/>
            <person name="Kalafus K.J."/>
            <person name="McLeod M.P."/>
            <person name="Milosavljevic A."/>
            <person name="Virk D."/>
            <person name="Volkov A."/>
            <person name="Wheeler D.A."/>
            <person name="Zhang Z."/>
            <person name="Bailey J.A."/>
            <person name="Eichler E.E."/>
            <person name="Tuzun E."/>
            <person name="Birney E."/>
            <person name="Mongin E."/>
            <person name="Ureta-Vidal A."/>
            <person name="Woodwark C."/>
            <person name="Zdobnov E."/>
            <person name="Bork P."/>
            <person name="Suyama M."/>
            <person name="Torrents D."/>
            <person name="Alexandersson M."/>
            <person name="Trask B.J."/>
            <person name="Young J.M."/>
            <person name="Huang H."/>
            <person name="Wang H."/>
            <person name="Xing H."/>
            <person name="Daniels S."/>
            <person name="Gietzen D."/>
            <person name="Schmidt J."/>
            <person name="Stevens K."/>
            <person name="Vitt U."/>
            <person name="Wingrove J."/>
            <person name="Camara F."/>
            <person name="Mar Alba M."/>
            <person name="Abril J.F."/>
            <person name="Guigo R."/>
            <person name="Smit A."/>
            <person name="Dubchak I."/>
            <person name="Rubin E.M."/>
            <person name="Couronne O."/>
            <person name="Poliakov A."/>
            <person name="Huebner N."/>
            <person name="Ganten D."/>
            <person name="Goesele C."/>
            <person name="Hummel O."/>
            <person name="Kreitler T."/>
            <person name="Lee Y.-A."/>
            <person name="Monti J."/>
            <person name="Schulz H."/>
            <person name="Zimdahl H."/>
            <person name="Himmelbauer H."/>
            <person name="Lehrach H."/>
            <person name="Jacob H.J."/>
            <person name="Bromberg S."/>
            <person name="Gullings-Handley J."/>
            <person name="Jensen-Seaman M.I."/>
            <person name="Kwitek A.E."/>
            <person name="Lazar J."/>
            <person name="Pasko D."/>
            <person name="Tonellato P.J."/>
            <person name="Twigger S."/>
            <person name="Ponting C.P."/>
            <person name="Duarte J.M."/>
            <person name="Rice S."/>
            <person name="Goodstadt L."/>
            <person name="Beatson S.A."/>
            <person name="Emes R.D."/>
            <person name="Winter E.E."/>
            <person name="Webber C."/>
            <person name="Brandt P."/>
            <person name="Nyakatura G."/>
            <person name="Adetobi M."/>
            <person name="Chiaromonte F."/>
            <person name="Elnitski L."/>
            <person name="Eswara P."/>
            <person name="Hardison R.C."/>
            <person name="Hou M."/>
            <person name="Kolbe D."/>
            <person name="Makova K."/>
            <person name="Miller W."/>
            <person name="Nekrutenko A."/>
            <person name="Riemer C."/>
            <person name="Schwartz S."/>
            <person name="Taylor J."/>
            <person name="Yang S."/>
            <person name="Zhang Y."/>
            <person name="Lindpaintner K."/>
            <person name="Andrews T.D."/>
            <person name="Caccamo M."/>
            <person name="Clamp M."/>
            <person name="Clarke L."/>
            <person name="Curwen V."/>
            <person name="Durbin R.M."/>
            <person name="Eyras E."/>
            <person name="Searle S.M."/>
            <person name="Cooper G.M."/>
            <person name="Batzoglou S."/>
            <person name="Brudno M."/>
            <person name="Sidow A."/>
            <person name="Stone E.A."/>
            <person name="Payseur B.A."/>
            <person name="Bourque G."/>
            <person name="Lopez-Otin C."/>
            <person name="Puente X.S."/>
            <person name="Chakrabarti K."/>
            <person name="Chatterji S."/>
            <person name="Dewey C."/>
            <person name="Pachter L."/>
            <person name="Bray N."/>
            <person name="Yap V.B."/>
            <person name="Caspi A."/>
            <person name="Tesler G."/>
            <person name="Pevzner P.A."/>
            <person name="Haussler D."/>
            <person name="Roskin K.M."/>
            <person name="Baertsch R."/>
            <person name="Clawson H."/>
            <person name="Furey T.S."/>
            <person name="Hinrichs A.S."/>
            <person name="Karolchik D."/>
            <person name="Kent W.J."/>
            <person name="Rosenbloom K.R."/>
            <person name="Trumbower H."/>
            <person name="Weirauch M."/>
            <person name="Cooper D.N."/>
            <person name="Stenson P.D."/>
            <person name="Ma B."/>
            <person name="Brent M."/>
            <person name="Arumugam M."/>
            <person name="Shteynberg D."/>
            <person name="Copley R.R."/>
            <person name="Taylor M.S."/>
            <person name="Riethman H."/>
            <person name="Mudunuri U."/>
            <person name="Peterson J."/>
            <person name="Guyer M."/>
            <person name="Felsenfeld A."/>
            <person name="Old S."/>
            <person name="Mockrin S."/>
            <person name="Collins F.S."/>
        </authorList>
    </citation>
    <scope>NUCLEOTIDE SEQUENCE [LARGE SCALE GENOMIC DNA]</scope>
    <source>
        <strain>Brown Norway</strain>
    </source>
</reference>
<reference key="2">
    <citation type="submission" date="2005-09" db="EMBL/GenBank/DDBJ databases">
        <authorList>
            <person name="Mural R.J."/>
            <person name="Adams M.D."/>
            <person name="Myers E.W."/>
            <person name="Smith H.O."/>
            <person name="Venter J.C."/>
        </authorList>
    </citation>
    <scope>NUCLEOTIDE SEQUENCE [LARGE SCALE GENOMIC DNA]</scope>
</reference>
<reference key="3">
    <citation type="journal article" date="1989" name="Proc. Natl. Acad. Sci. U.S.A.">
        <title>Isolation of a rat liver Golgi mannosidase II clone by mixed oligonucleotide-primed amplification of cDNA.</title>
        <authorList>
            <person name="Moremen K.W."/>
        </authorList>
    </citation>
    <scope>NUCLEOTIDE SEQUENCE [MRNA] OF 46-521</scope>
    <scope>SUBCELLULAR LOCATION</scope>
    <scope>TISSUE SPECIFICITY</scope>
    <source>
        <strain>Sprague-Dawley</strain>
        <tissue>Liver</tissue>
    </source>
</reference>
<reference key="4">
    <citation type="journal article" date="1990" name="J. Biol. Chem.">
        <title>Mannosidase II and the 135-kDa Golgi-specific antigen recognized monoclonal antibody 53FC3 are the same dimeric protein.</title>
        <authorList>
            <person name="Baron M.D."/>
            <person name="Garoff H."/>
        </authorList>
    </citation>
    <scope>PROTEIN SEQUENCE OF 156-171 AND 243-256</scope>
    <scope>SUBCELLULAR LOCATION</scope>
    <scope>SUBUNIT</scope>
</reference>
<reference key="5">
    <citation type="journal article" date="1991" name="J. Biol. Chem.">
        <title>Novel purification of the catalytic domain of Golgi alpha-mannosidase II. Characterization and comparison with the intact enzyme.</title>
        <authorList>
            <person name="Moremen K.W."/>
            <person name="Touster O."/>
            <person name="Robbins P.W."/>
        </authorList>
    </citation>
    <scope>PROTEIN SEQUENCE OF 107-136 AND 478-496</scope>
    <scope>CATALYTIC ACTIVITY</scope>
    <scope>ACTIVITY REGULATION</scope>
    <scope>SUBUNIT</scope>
    <scope>SUBCELLULAR LOCATION</scope>
    <scope>TISSUE SPECIFICITY</scope>
    <scope>GLYCOSYLATION</scope>
    <source>
        <strain>Sprague-Dawley</strain>
        <tissue>Liver</tissue>
    </source>
</reference>
<reference key="6">
    <citation type="journal article" date="2012" name="Nat. Commun.">
        <title>Quantitative maps of protein phosphorylation sites across 14 different rat organs and tissues.</title>
        <authorList>
            <person name="Lundby A."/>
            <person name="Secher A."/>
            <person name="Lage K."/>
            <person name="Nordsborg N.B."/>
            <person name="Dmytriyev A."/>
            <person name="Lundby C."/>
            <person name="Olsen J.V."/>
        </authorList>
    </citation>
    <scope>PHOSPHORYLATION [LARGE SCALE ANALYSIS] AT SER-80 AND SER-82</scope>
    <scope>IDENTIFICATION BY MASS SPECTROMETRY [LARGE SCALE ANALYSIS]</scope>
</reference>
<keyword id="KW-0175">Coiled coil</keyword>
<keyword id="KW-0903">Direct protein sequencing</keyword>
<keyword id="KW-1015">Disulfide bond</keyword>
<keyword id="KW-0325">Glycoprotein</keyword>
<keyword id="KW-0326">Glycosidase</keyword>
<keyword id="KW-0333">Golgi apparatus</keyword>
<keyword id="KW-0378">Hydrolase</keyword>
<keyword id="KW-0472">Membrane</keyword>
<keyword id="KW-0479">Metal-binding</keyword>
<keyword id="KW-0597">Phosphoprotein</keyword>
<keyword id="KW-1185">Reference proteome</keyword>
<keyword id="KW-0735">Signal-anchor</keyword>
<keyword id="KW-0812">Transmembrane</keyword>
<keyword id="KW-1133">Transmembrane helix</keyword>
<keyword id="KW-0862">Zinc</keyword>